<accession>Q14I18</accession>
<evidence type="ECO:0000255" key="1">
    <source>
        <dbReference type="HAMAP-Rule" id="MF_00514"/>
    </source>
</evidence>
<evidence type="ECO:0000256" key="2">
    <source>
        <dbReference type="SAM" id="MobiDB-lite"/>
    </source>
</evidence>
<evidence type="ECO:0000305" key="3"/>
<keyword id="KW-0687">Ribonucleoprotein</keyword>
<keyword id="KW-0689">Ribosomal protein</keyword>
<feature type="chain" id="PRO_1000050690" description="Large ribosomal subunit protein bL35">
    <location>
        <begin position="1"/>
        <end position="65"/>
    </location>
</feature>
<feature type="region of interest" description="Disordered" evidence="2">
    <location>
        <begin position="1"/>
        <end position="23"/>
    </location>
</feature>
<feature type="region of interest" description="Disordered" evidence="2">
    <location>
        <begin position="36"/>
        <end position="65"/>
    </location>
</feature>
<feature type="compositionally biased region" description="Polar residues" evidence="2">
    <location>
        <begin position="54"/>
        <end position="65"/>
    </location>
</feature>
<dbReference type="EMBL" id="AM286280">
    <property type="protein sequence ID" value="CAL08835.1"/>
    <property type="molecule type" value="Genomic_DNA"/>
</dbReference>
<dbReference type="RefSeq" id="WP_003016672.1">
    <property type="nucleotide sequence ID" value="NC_008245.1"/>
</dbReference>
<dbReference type="SMR" id="Q14I18"/>
<dbReference type="KEGG" id="ftf:FTF0819"/>
<dbReference type="HOGENOM" id="CLU_169643_1_1_6"/>
<dbReference type="GO" id="GO:0022625">
    <property type="term" value="C:cytosolic large ribosomal subunit"/>
    <property type="evidence" value="ECO:0007669"/>
    <property type="project" value="TreeGrafter"/>
</dbReference>
<dbReference type="GO" id="GO:0003735">
    <property type="term" value="F:structural constituent of ribosome"/>
    <property type="evidence" value="ECO:0007669"/>
    <property type="project" value="InterPro"/>
</dbReference>
<dbReference type="GO" id="GO:0006412">
    <property type="term" value="P:translation"/>
    <property type="evidence" value="ECO:0007669"/>
    <property type="project" value="UniProtKB-UniRule"/>
</dbReference>
<dbReference type="FunFam" id="4.10.410.60:FF:000001">
    <property type="entry name" value="50S ribosomal protein L35"/>
    <property type="match status" value="1"/>
</dbReference>
<dbReference type="Gene3D" id="4.10.410.60">
    <property type="match status" value="1"/>
</dbReference>
<dbReference type="HAMAP" id="MF_00514">
    <property type="entry name" value="Ribosomal_bL35"/>
    <property type="match status" value="1"/>
</dbReference>
<dbReference type="InterPro" id="IPR001706">
    <property type="entry name" value="Ribosomal_bL35"/>
</dbReference>
<dbReference type="InterPro" id="IPR021137">
    <property type="entry name" value="Ribosomal_bL35-like"/>
</dbReference>
<dbReference type="InterPro" id="IPR018265">
    <property type="entry name" value="Ribosomal_bL35_CS"/>
</dbReference>
<dbReference type="InterPro" id="IPR037229">
    <property type="entry name" value="Ribosomal_bL35_sf"/>
</dbReference>
<dbReference type="NCBIfam" id="TIGR00001">
    <property type="entry name" value="rpmI_bact"/>
    <property type="match status" value="1"/>
</dbReference>
<dbReference type="PANTHER" id="PTHR33343">
    <property type="entry name" value="54S RIBOSOMAL PROTEIN BL35M"/>
    <property type="match status" value="1"/>
</dbReference>
<dbReference type="PANTHER" id="PTHR33343:SF1">
    <property type="entry name" value="LARGE RIBOSOMAL SUBUNIT PROTEIN BL35M"/>
    <property type="match status" value="1"/>
</dbReference>
<dbReference type="Pfam" id="PF01632">
    <property type="entry name" value="Ribosomal_L35p"/>
    <property type="match status" value="1"/>
</dbReference>
<dbReference type="PRINTS" id="PR00064">
    <property type="entry name" value="RIBOSOMALL35"/>
</dbReference>
<dbReference type="SUPFAM" id="SSF143034">
    <property type="entry name" value="L35p-like"/>
    <property type="match status" value="1"/>
</dbReference>
<dbReference type="PROSITE" id="PS00936">
    <property type="entry name" value="RIBOSOMAL_L35"/>
    <property type="match status" value="1"/>
</dbReference>
<comment type="similarity">
    <text evidence="1">Belongs to the bacterial ribosomal protein bL35 family.</text>
</comment>
<reference key="1">
    <citation type="journal article" date="2007" name="PLoS ONE">
        <title>Genome sequencing shows that European isolates of Francisella tularensis subspecies tularensis are almost identical to US laboratory strain Schu S4.</title>
        <authorList>
            <person name="Chaudhuri R.R."/>
            <person name="Ren C.-P."/>
            <person name="Desmond L."/>
            <person name="Vincent G.A."/>
            <person name="Silman N.J."/>
            <person name="Brehm J.K."/>
            <person name="Elmore M.J."/>
            <person name="Hudson M.J."/>
            <person name="Forsman M."/>
            <person name="Isherwood K.E."/>
            <person name="Gurycova D."/>
            <person name="Minton N.P."/>
            <person name="Titball R.W."/>
            <person name="Pallen M.J."/>
            <person name="Vipond R."/>
        </authorList>
    </citation>
    <scope>NUCLEOTIDE SEQUENCE [LARGE SCALE GENOMIC DNA]</scope>
    <source>
        <strain>FSC 198</strain>
    </source>
</reference>
<gene>
    <name evidence="1" type="primary">rpmI</name>
    <name type="ordered locus">FTF0819</name>
</gene>
<protein>
    <recommendedName>
        <fullName evidence="1">Large ribosomal subunit protein bL35</fullName>
    </recommendedName>
    <alternativeName>
        <fullName evidence="3">50S ribosomal protein L35</fullName>
    </alternativeName>
</protein>
<organism>
    <name type="scientific">Francisella tularensis subsp. tularensis (strain FSC 198)</name>
    <dbReference type="NCBI Taxonomy" id="393115"/>
    <lineage>
        <taxon>Bacteria</taxon>
        <taxon>Pseudomonadati</taxon>
        <taxon>Pseudomonadota</taxon>
        <taxon>Gammaproteobacteria</taxon>
        <taxon>Thiotrichales</taxon>
        <taxon>Francisellaceae</taxon>
        <taxon>Francisella</taxon>
    </lineage>
</organism>
<name>RL35_FRAT1</name>
<sequence>MPKLKTKSGAAKRFKKTGKGGFKHRCANRAHINTKMTTKRKRHLRGMNQVAKVDTTSLVQQMPYA</sequence>
<proteinExistence type="inferred from homology"/>